<feature type="chain" id="PRO_0000276555" description="Protein Ycf2">
    <location>
        <begin position="1"/>
        <end position="2314"/>
    </location>
</feature>
<feature type="binding site" evidence="1">
    <location>
        <begin position="1653"/>
        <end position="1660"/>
    </location>
    <ligand>
        <name>ATP</name>
        <dbReference type="ChEBI" id="CHEBI:30616"/>
    </ligand>
</feature>
<accession>Q06GJ7</accession>
<gene>
    <name evidence="1" type="primary">ycf2-A</name>
</gene>
<gene>
    <name evidence="1" type="primary">ycf2-B</name>
</gene>
<evidence type="ECO:0000255" key="1">
    <source>
        <dbReference type="HAMAP-Rule" id="MF_01330"/>
    </source>
</evidence>
<sequence>MKGHQFQSWIFELREILREVKNSHYFLDSWTQFDSVGSFTHIFFHQERFMKLFDPRIWSILLSRDSQGSTSNRYFTVKGVVLLVVAVLIYRINNRNIVERKNLYLRGLLPIPILPIPMNSIGPRNDTLEESFWSSNINRLIVSLLYLPKGKKISESCFMDSKESAWVLPITKKKCIIPESNWGSRWWRNRIGKKRDSSCKISNETETIAGIEISFKEKDIQYLKFLFVSYTDDPIRKDHDWELFDRLSPRKKRNIINLNSGQLFEILVKHLICYLMSAFREKRPIEMGGFFKQQGGAGATIQSNDIEHVSHLFSRKKWGIFLQNCAQFHMWQFYQDLFVSWGKNQHESDFLRNVSRDNWIWLDNVWLVNKDRFFSKVLNVSSNIQYDSTRSIFVQVTDSSQLKGSSDQSGDHFDSIRNENSEYHTLINQTEIQQLKERSILWDPSFLQTERTEIESDRFPKCLSGYSSISRLFTEREKQMNNHLLPEEIEEFLGNPTRSIRSFFSDRWSELRLGSNPTERSTRDQKLLKKQQDVSFVPSRRSENKEMVAIFKIITYLQNTVSIHPISSDPGCDMVPKDEPDIDSSHKISFLNKNPFLDLFHLFHDRNKGGYTLHHDFESEERFQEMADLFTLSITEAGLVYHKGFTFSIDSYGLDQKKFLNEVFNSRDESKKKSLWFLPPIFDEENESFYGRIRKKSARISCGNDLEDPNPKIVVFSSNNIMGAVNQYRLIRNLIQIQYRTYEYIRNVSNRFFLMNRPDRNFEYGIQGDPIGNDTLNHLTIIKHTINQHLSNLKKSQKKWFDPLISRTERCMNRDPDAYRYKWSNGSKNFQEHLEHFVSEQKHRFQVVFGRLRINQYSIDWSEVIDKQDLSKSLRFFLSKSLLFLSKSLRFFLSKSLPFFFVSIGNIPIHRFEIHIYELKGPNDQLCNPLLESIGVQIVHLNKLKPFLLDDHDISQRSKFLINGGTISPFLFNKIPKWMIDSFHTRKNRRKSFDNTDSYFSMISHDRDNWLNPVKPFHRSSSISSFYKANRLRFLNNPHHLWFYCNKRFPFDVEKARINNYDLTYGQFLNVLFIRNKIFSLCVRKKKHVFGGRDAISPIESQVSDIFIPNDFPQSGDETYNLYKSFHFPIRSDSFVRRAIYSIADISGTPLTEEQIVHFQRTYCQPLSDMNLSDSEGKNLHQYLRFNSNMGLIHTLCSEKDFPSGKRKKRTLCLKKCVEKWQMYRTFQRDNDFSNLSKWNLFQTYMPWFLTSTGCKYLNFTLLDTFSDPLPILSNSPKFVSIFHDIMHGSDISWPIPQQKGRAILPQRNWISEMSSKCLQNLLLYEEIIHRNNESPALLIWTHLRSPNARELLYSILFLLLVAGYLVRTHLLFVSRASSELQTELEKIKSLMIPSYMMELRKLLDRYPTPELNSFWLKNLFLVALEQLGDSLEEIRGSASGGNILLGGGPAYGVKSIRSKKKYLNINLIDIIDFISIIPNPINRITFSRNTRHLSHTSKEIYSLIRKRKKNVNGGWIDEKIESWVANSDSIDDEEREFLVQFSTLTTEKRIDQILLSLTHSDHLSKNDSGYQMIEQPGSIYLRYLVDIHKKYLMNYEFNRSCLAERRIFLAHYQTITYSQTSCGTNSSHFPSHGKPFSLRLALSPSRGILVIGSIGTGRSYLVKYLATNSYVPFITVFPNKFLDDKPKGSLFDNIDIDDSDDIDIDDSDDIDIDDSDNIDDLDTELLTMTNVLTMYMTPKIDRFDITLQFELAKAMSPCIIWIPNIHDLYVNESNYLSLGLLVNYLSRDCERCSTRNILLIASTHIPQKVDPALIAPNKLNTCIKIRRLLIPQQRKHFFILSYTRGFHLEKKMFHTNVFGSITMGSNARDLVALTNEALSISITQKKSIIDTNTIRSAIHRQTWDLRSQVRWVQDHGILFYQIGRAVAQNVLLSDCPIDPISIYMKKKSCKEGDSYLYKWYFELGTSMKKLTILLYLLSCSAGSVAQDLWSPPGPDERNCITSYGFVENDSDLVHGLLEVEGALVGSSRTEKDCSQFDNDRVILLLRSEPKNPFDMIQNGSCSIVDQRFLYEKYESELEEGEGEGALDPQQIEEDLFNHIVWAPRIWRPCGNLFDCIERPNELGFPYWWTRSFRGKRILYHKEDALQENDSEFLQSGTVRYQRLDRSSKEQGFFRISQFIWDPADPFFFLFKDQPFVFSRREFFADEEMSKGLITSQTNPTTSIYKRWFIKNTQQNHFELLIHRQRWLRTNSLLSNGSFRSNTLSESYQYLSNLFLSNRTLLDQMTKALLRKRWLFPDEMKHWIHVTGERFPIP</sequence>
<organism>
    <name type="scientific">Piper cenocladum</name>
    <name type="common">Ant piper</name>
    <dbReference type="NCBI Taxonomy" id="398741"/>
    <lineage>
        <taxon>Eukaryota</taxon>
        <taxon>Viridiplantae</taxon>
        <taxon>Streptophyta</taxon>
        <taxon>Embryophyta</taxon>
        <taxon>Tracheophyta</taxon>
        <taxon>Spermatophyta</taxon>
        <taxon>Magnoliopsida</taxon>
        <taxon>Magnoliidae</taxon>
        <taxon>Piperales</taxon>
        <taxon>Piperaceae</taxon>
        <taxon>Piper</taxon>
    </lineage>
</organism>
<name>YCF2_PIPCE</name>
<protein>
    <recommendedName>
        <fullName evidence="1">Protein Ycf2</fullName>
    </recommendedName>
</protein>
<reference key="1">
    <citation type="journal article" date="2006" name="BMC Evol. Biol.">
        <title>Complete plastid genome sequences of Drimys, Liriodendron, and Piper: implications for the phylogenetic relationships of magnoliids.</title>
        <authorList>
            <person name="Cai Z."/>
            <person name="Penaflor C."/>
            <person name="Kuehl J.V."/>
            <person name="Leebens-Mack J."/>
            <person name="Carlson J.E."/>
            <person name="dePamphilis C.W."/>
            <person name="Boore J.L."/>
            <person name="Jansen R.K."/>
        </authorList>
    </citation>
    <scope>NUCLEOTIDE SEQUENCE [LARGE SCALE GENOMIC DNA]</scope>
</reference>
<dbReference type="EMBL" id="DQ887677">
    <property type="protein sequence ID" value="ABI14515.1"/>
    <property type="molecule type" value="Genomic_DNA"/>
</dbReference>
<dbReference type="EMBL" id="DQ887677">
    <property type="protein sequence ID" value="ABI14534.1"/>
    <property type="molecule type" value="Genomic_DNA"/>
</dbReference>
<dbReference type="GO" id="GO:0009570">
    <property type="term" value="C:chloroplast stroma"/>
    <property type="evidence" value="ECO:0007669"/>
    <property type="project" value="UniProtKB-SubCell"/>
</dbReference>
<dbReference type="GO" id="GO:0005524">
    <property type="term" value="F:ATP binding"/>
    <property type="evidence" value="ECO:0007669"/>
    <property type="project" value="UniProtKB-KW"/>
</dbReference>
<dbReference type="GO" id="GO:0016887">
    <property type="term" value="F:ATP hydrolysis activity"/>
    <property type="evidence" value="ECO:0007669"/>
    <property type="project" value="InterPro"/>
</dbReference>
<dbReference type="CDD" id="cd19505">
    <property type="entry name" value="RecA-like_Ycf2"/>
    <property type="match status" value="1"/>
</dbReference>
<dbReference type="Gene3D" id="3.40.50.300">
    <property type="entry name" value="P-loop containing nucleotide triphosphate hydrolases"/>
    <property type="match status" value="1"/>
</dbReference>
<dbReference type="HAMAP" id="MF_01330">
    <property type="entry name" value="Ycf2"/>
    <property type="match status" value="1"/>
</dbReference>
<dbReference type="InterPro" id="IPR003593">
    <property type="entry name" value="AAA+_ATPase"/>
</dbReference>
<dbReference type="InterPro" id="IPR003959">
    <property type="entry name" value="ATPase_AAA_core"/>
</dbReference>
<dbReference type="InterPro" id="IPR027417">
    <property type="entry name" value="P-loop_NTPase"/>
</dbReference>
<dbReference type="InterPro" id="IPR008543">
    <property type="entry name" value="Uncharacterised_Ycf2"/>
</dbReference>
<dbReference type="InterPro" id="IPR056777">
    <property type="entry name" value="Ycf2_N"/>
</dbReference>
<dbReference type="PANTHER" id="PTHR33078:SF92">
    <property type="entry name" value="PROTEIN YCF2"/>
    <property type="match status" value="1"/>
</dbReference>
<dbReference type="PANTHER" id="PTHR33078">
    <property type="entry name" value="PROTEIN YCF2-RELATED"/>
    <property type="match status" value="1"/>
</dbReference>
<dbReference type="Pfam" id="PF00004">
    <property type="entry name" value="AAA"/>
    <property type="match status" value="1"/>
</dbReference>
<dbReference type="Pfam" id="PF05695">
    <property type="entry name" value="Ycf2"/>
    <property type="match status" value="1"/>
</dbReference>
<dbReference type="SMART" id="SM00382">
    <property type="entry name" value="AAA"/>
    <property type="match status" value="1"/>
</dbReference>
<dbReference type="SUPFAM" id="SSF52540">
    <property type="entry name" value="P-loop containing nucleoside triphosphate hydrolases"/>
    <property type="match status" value="1"/>
</dbReference>
<proteinExistence type="inferred from homology"/>
<keyword id="KW-0067">ATP-binding</keyword>
<keyword id="KW-0150">Chloroplast</keyword>
<keyword id="KW-0547">Nucleotide-binding</keyword>
<keyword id="KW-0934">Plastid</keyword>
<geneLocation type="chloroplast"/>
<comment type="function">
    <text>Probable ATPase of unknown function. Its presence in a non-photosynthetic plant (Epifagus virginiana) and experiments in tobacco indicate that it has an essential function which is probably not related to photosynthesis.</text>
</comment>
<comment type="subcellular location">
    <subcellularLocation>
        <location evidence="1">Plastid</location>
        <location evidence="1">Chloroplast stroma</location>
    </subcellularLocation>
</comment>
<comment type="similarity">
    <text evidence="1">Belongs to the Ycf2 family.</text>
</comment>